<dbReference type="EMBL" id="CU329671">
    <property type="protein sequence ID" value="CAB66457.1"/>
    <property type="molecule type" value="Genomic_DNA"/>
</dbReference>
<dbReference type="PIR" id="T50326">
    <property type="entry name" value="T50326"/>
</dbReference>
<dbReference type="RefSeq" id="NP_596208.1">
    <property type="nucleotide sequence ID" value="NM_001022127.2"/>
</dbReference>
<dbReference type="SMR" id="Q9P7V8"/>
<dbReference type="BioGRID" id="276207">
    <property type="interactions" value="8"/>
</dbReference>
<dbReference type="FunCoup" id="Q9P7V8">
    <property type="interactions" value="401"/>
</dbReference>
<dbReference type="STRING" id="284812.Q9P7V8"/>
<dbReference type="iPTMnet" id="Q9P7V8"/>
<dbReference type="PaxDb" id="4896-SPBC1703.13c.1"/>
<dbReference type="EnsemblFungi" id="SPBC1703.13c.1">
    <property type="protein sequence ID" value="SPBC1703.13c.1:pep"/>
    <property type="gene ID" value="SPBC1703.13c"/>
</dbReference>
<dbReference type="KEGG" id="spo:2539652"/>
<dbReference type="PomBase" id="SPBC1703.13c"/>
<dbReference type="VEuPathDB" id="FungiDB:SPBC1703.13c"/>
<dbReference type="eggNOG" id="KOG0767">
    <property type="taxonomic scope" value="Eukaryota"/>
</dbReference>
<dbReference type="HOGENOM" id="CLU_039456_2_0_1"/>
<dbReference type="InParanoid" id="Q9P7V8"/>
<dbReference type="OMA" id="PERAYAW"/>
<dbReference type="PhylomeDB" id="Q9P7V8"/>
<dbReference type="PRO" id="PR:Q9P7V8"/>
<dbReference type="Proteomes" id="UP000002485">
    <property type="component" value="Chromosome II"/>
</dbReference>
<dbReference type="GO" id="GO:0005743">
    <property type="term" value="C:mitochondrial inner membrane"/>
    <property type="evidence" value="ECO:0000318"/>
    <property type="project" value="GO_Central"/>
</dbReference>
<dbReference type="GO" id="GO:0005739">
    <property type="term" value="C:mitochondrion"/>
    <property type="evidence" value="ECO:0007005"/>
    <property type="project" value="PomBase"/>
</dbReference>
<dbReference type="GO" id="GO:0005315">
    <property type="term" value="F:phosphate transmembrane transporter activity"/>
    <property type="evidence" value="ECO:0000318"/>
    <property type="project" value="GO_Central"/>
</dbReference>
<dbReference type="GO" id="GO:0035434">
    <property type="term" value="P:copper ion transmembrane transport"/>
    <property type="evidence" value="ECO:0000304"/>
    <property type="project" value="PomBase"/>
</dbReference>
<dbReference type="GO" id="GO:1990547">
    <property type="term" value="P:mitochondrial phosphate ion transmembrane transport"/>
    <property type="evidence" value="ECO:0000250"/>
    <property type="project" value="PomBase"/>
</dbReference>
<dbReference type="GO" id="GO:0006820">
    <property type="term" value="P:monoatomic anion transport"/>
    <property type="evidence" value="ECO:0000303"/>
    <property type="project" value="PomBase"/>
</dbReference>
<dbReference type="GO" id="GO:0035435">
    <property type="term" value="P:phosphate ion transmembrane transport"/>
    <property type="evidence" value="ECO:0000318"/>
    <property type="project" value="GO_Central"/>
</dbReference>
<dbReference type="FunFam" id="1.50.40.10:FF:000076">
    <property type="entry name" value="Mitochondrial phosphate carrier protein 2"/>
    <property type="match status" value="1"/>
</dbReference>
<dbReference type="FunFam" id="1.50.40.10:FF:000131">
    <property type="entry name" value="Mitochondrial phosphate carrier protein 2"/>
    <property type="match status" value="1"/>
</dbReference>
<dbReference type="Gene3D" id="1.50.40.10">
    <property type="entry name" value="Mitochondrial carrier domain"/>
    <property type="match status" value="2"/>
</dbReference>
<dbReference type="InterPro" id="IPR018108">
    <property type="entry name" value="Mitochondrial_sb/sol_carrier"/>
</dbReference>
<dbReference type="InterPro" id="IPR023395">
    <property type="entry name" value="Mt_carrier_dom_sf"/>
</dbReference>
<dbReference type="InterPro" id="IPR044677">
    <property type="entry name" value="SLC25A3/Pic2/Mir1-like"/>
</dbReference>
<dbReference type="PANTHER" id="PTHR45671">
    <property type="entry name" value="SOLUTE CARRIER FAMILY 25 (MITOCHONDRIAL CARRIER PHOSPHATE CARRIER), MEMBER 3, LIKE-RELATED-RELATED"/>
    <property type="match status" value="1"/>
</dbReference>
<dbReference type="PANTHER" id="PTHR45671:SF10">
    <property type="entry name" value="SOLUTE CARRIER FAMILY 25 MEMBER 3"/>
    <property type="match status" value="1"/>
</dbReference>
<dbReference type="Pfam" id="PF00153">
    <property type="entry name" value="Mito_carr"/>
    <property type="match status" value="3"/>
</dbReference>
<dbReference type="SUPFAM" id="SSF103506">
    <property type="entry name" value="Mitochondrial carrier"/>
    <property type="match status" value="1"/>
</dbReference>
<dbReference type="PROSITE" id="PS50920">
    <property type="entry name" value="SOLCAR"/>
    <property type="match status" value="3"/>
</dbReference>
<comment type="function">
    <text evidence="1">Transport of phosphate groups from the cytosol to the mitochondrial matrix.</text>
</comment>
<comment type="subcellular location">
    <subcellularLocation>
        <location evidence="3">Mitochondrion inner membrane</location>
        <topology evidence="3">Multi-pass membrane protein</topology>
    </subcellularLocation>
</comment>
<comment type="similarity">
    <text evidence="4">Belongs to the mitochondrial carrier (TC 2.A.29) family.</text>
</comment>
<keyword id="KW-0472">Membrane</keyword>
<keyword id="KW-0496">Mitochondrion</keyword>
<keyword id="KW-0999">Mitochondrion inner membrane</keyword>
<keyword id="KW-1185">Reference proteome</keyword>
<keyword id="KW-0677">Repeat</keyword>
<keyword id="KW-0812">Transmembrane</keyword>
<keyword id="KW-1133">Transmembrane helix</keyword>
<keyword id="KW-0813">Transport</keyword>
<reference key="1">
    <citation type="journal article" date="2002" name="Nature">
        <title>The genome sequence of Schizosaccharomyces pombe.</title>
        <authorList>
            <person name="Wood V."/>
            <person name="Gwilliam R."/>
            <person name="Rajandream M.A."/>
            <person name="Lyne M.H."/>
            <person name="Lyne R."/>
            <person name="Stewart A."/>
            <person name="Sgouros J.G."/>
            <person name="Peat N."/>
            <person name="Hayles J."/>
            <person name="Baker S.G."/>
            <person name="Basham D."/>
            <person name="Bowman S."/>
            <person name="Brooks K."/>
            <person name="Brown D."/>
            <person name="Brown S."/>
            <person name="Chillingworth T."/>
            <person name="Churcher C.M."/>
            <person name="Collins M."/>
            <person name="Connor R."/>
            <person name="Cronin A."/>
            <person name="Davis P."/>
            <person name="Feltwell T."/>
            <person name="Fraser A."/>
            <person name="Gentles S."/>
            <person name="Goble A."/>
            <person name="Hamlin N."/>
            <person name="Harris D.E."/>
            <person name="Hidalgo J."/>
            <person name="Hodgson G."/>
            <person name="Holroyd S."/>
            <person name="Hornsby T."/>
            <person name="Howarth S."/>
            <person name="Huckle E.J."/>
            <person name="Hunt S."/>
            <person name="Jagels K."/>
            <person name="James K.D."/>
            <person name="Jones L."/>
            <person name="Jones M."/>
            <person name="Leather S."/>
            <person name="McDonald S."/>
            <person name="McLean J."/>
            <person name="Mooney P."/>
            <person name="Moule S."/>
            <person name="Mungall K.L."/>
            <person name="Murphy L.D."/>
            <person name="Niblett D."/>
            <person name="Odell C."/>
            <person name="Oliver K."/>
            <person name="O'Neil S."/>
            <person name="Pearson D."/>
            <person name="Quail M.A."/>
            <person name="Rabbinowitsch E."/>
            <person name="Rutherford K.M."/>
            <person name="Rutter S."/>
            <person name="Saunders D."/>
            <person name="Seeger K."/>
            <person name="Sharp S."/>
            <person name="Skelton J."/>
            <person name="Simmonds M.N."/>
            <person name="Squares R."/>
            <person name="Squares S."/>
            <person name="Stevens K."/>
            <person name="Taylor K."/>
            <person name="Taylor R.G."/>
            <person name="Tivey A."/>
            <person name="Walsh S.V."/>
            <person name="Warren T."/>
            <person name="Whitehead S."/>
            <person name="Woodward J.R."/>
            <person name="Volckaert G."/>
            <person name="Aert R."/>
            <person name="Robben J."/>
            <person name="Grymonprez B."/>
            <person name="Weltjens I."/>
            <person name="Vanstreels E."/>
            <person name="Rieger M."/>
            <person name="Schaefer M."/>
            <person name="Mueller-Auer S."/>
            <person name="Gabel C."/>
            <person name="Fuchs M."/>
            <person name="Duesterhoeft A."/>
            <person name="Fritzc C."/>
            <person name="Holzer E."/>
            <person name="Moestl D."/>
            <person name="Hilbert H."/>
            <person name="Borzym K."/>
            <person name="Langer I."/>
            <person name="Beck A."/>
            <person name="Lehrach H."/>
            <person name="Reinhardt R."/>
            <person name="Pohl T.M."/>
            <person name="Eger P."/>
            <person name="Zimmermann W."/>
            <person name="Wedler H."/>
            <person name="Wambutt R."/>
            <person name="Purnelle B."/>
            <person name="Goffeau A."/>
            <person name="Cadieu E."/>
            <person name="Dreano S."/>
            <person name="Gloux S."/>
            <person name="Lelaure V."/>
            <person name="Mottier S."/>
            <person name="Galibert F."/>
            <person name="Aves S.J."/>
            <person name="Xiang Z."/>
            <person name="Hunt C."/>
            <person name="Moore K."/>
            <person name="Hurst S.M."/>
            <person name="Lucas M."/>
            <person name="Rochet M."/>
            <person name="Gaillardin C."/>
            <person name="Tallada V.A."/>
            <person name="Garzon A."/>
            <person name="Thode G."/>
            <person name="Daga R.R."/>
            <person name="Cruzado L."/>
            <person name="Jimenez J."/>
            <person name="Sanchez M."/>
            <person name="del Rey F."/>
            <person name="Benito J."/>
            <person name="Dominguez A."/>
            <person name="Revuelta J.L."/>
            <person name="Moreno S."/>
            <person name="Armstrong J."/>
            <person name="Forsburg S.L."/>
            <person name="Cerutti L."/>
            <person name="Lowe T."/>
            <person name="McCombie W.R."/>
            <person name="Paulsen I."/>
            <person name="Potashkin J."/>
            <person name="Shpakovski G.V."/>
            <person name="Ussery D."/>
            <person name="Barrell B.G."/>
            <person name="Nurse P."/>
        </authorList>
    </citation>
    <scope>NUCLEOTIDE SEQUENCE [LARGE SCALE GENOMIC DNA]</scope>
    <source>
        <strain>972 / ATCC 24843</strain>
    </source>
</reference>
<reference key="2">
    <citation type="journal article" date="2006" name="Nat. Biotechnol.">
        <title>ORFeome cloning and global analysis of protein localization in the fission yeast Schizosaccharomyces pombe.</title>
        <authorList>
            <person name="Matsuyama A."/>
            <person name="Arai R."/>
            <person name="Yashiroda Y."/>
            <person name="Shirai A."/>
            <person name="Kamata A."/>
            <person name="Sekido S."/>
            <person name="Kobayashi Y."/>
            <person name="Hashimoto A."/>
            <person name="Hamamoto M."/>
            <person name="Hiraoka Y."/>
            <person name="Horinouchi S."/>
            <person name="Yoshida M."/>
        </authorList>
    </citation>
    <scope>SUBCELLULAR LOCATION [LARGE SCALE ANALYSIS]</scope>
</reference>
<organism>
    <name type="scientific">Schizosaccharomyces pombe (strain 972 / ATCC 24843)</name>
    <name type="common">Fission yeast</name>
    <dbReference type="NCBI Taxonomy" id="284812"/>
    <lineage>
        <taxon>Eukaryota</taxon>
        <taxon>Fungi</taxon>
        <taxon>Dikarya</taxon>
        <taxon>Ascomycota</taxon>
        <taxon>Taphrinomycotina</taxon>
        <taxon>Schizosaccharomycetes</taxon>
        <taxon>Schizosaccharomycetales</taxon>
        <taxon>Schizosaccharomycetaceae</taxon>
        <taxon>Schizosaccharomyces</taxon>
    </lineage>
</organism>
<name>MPCP_SCHPO</name>
<protein>
    <recommendedName>
        <fullName>Probable mitochondrial phosphate carrier protein</fullName>
    </recommendedName>
</protein>
<accession>Q9P7V8</accession>
<proteinExistence type="inferred from homology"/>
<gene>
    <name type="ORF">SPBC1703.13c</name>
</gene>
<evidence type="ECO:0000250" key="1"/>
<evidence type="ECO:0000255" key="2"/>
<evidence type="ECO:0000269" key="3">
    <source>
    </source>
</evidence>
<evidence type="ECO:0000305" key="4"/>
<feature type="chain" id="PRO_0000310804" description="Probable mitochondrial phosphate carrier protein">
    <location>
        <begin position="1"/>
        <end position="311"/>
    </location>
</feature>
<feature type="topological domain" description="Mitochondrial intermembrane" evidence="2">
    <location>
        <begin position="1"/>
        <end position="23"/>
    </location>
</feature>
<feature type="transmembrane region" description="Helical; Name=1" evidence="2">
    <location>
        <begin position="24"/>
        <end position="44"/>
    </location>
</feature>
<feature type="topological domain" description="Mitochondrial matrix" evidence="2">
    <location>
        <begin position="45"/>
        <end position="67"/>
    </location>
</feature>
<feature type="transmembrane region" description="Helical; Name=2" evidence="2">
    <location>
        <begin position="68"/>
        <end position="88"/>
    </location>
</feature>
<feature type="topological domain" description="Mitochondrial intermembrane" evidence="2">
    <location>
        <begin position="89"/>
        <end position="120"/>
    </location>
</feature>
<feature type="transmembrane region" description="Helical; Name=3" evidence="2">
    <location>
        <begin position="121"/>
        <end position="141"/>
    </location>
</feature>
<feature type="topological domain" description="Mitochondrial matrix" evidence="2">
    <location>
        <begin position="142"/>
        <end position="171"/>
    </location>
</feature>
<feature type="transmembrane region" description="Helical; Name=4" evidence="2">
    <location>
        <begin position="172"/>
        <end position="192"/>
    </location>
</feature>
<feature type="topological domain" description="Mitochondrial intermembrane" evidence="2">
    <location>
        <begin position="193"/>
        <end position="220"/>
    </location>
</feature>
<feature type="transmembrane region" description="Helical; Name=5" evidence="2">
    <location>
        <begin position="221"/>
        <end position="241"/>
    </location>
</feature>
<feature type="topological domain" description="Mitochondrial matrix" evidence="2">
    <location>
        <begin position="242"/>
        <end position="269"/>
    </location>
</feature>
<feature type="transmembrane region" description="Helical; Name=6" evidence="2">
    <location>
        <begin position="270"/>
        <end position="290"/>
    </location>
</feature>
<feature type="topological domain" description="Mitochondrial intermembrane" evidence="2">
    <location>
        <begin position="291"/>
        <end position="311"/>
    </location>
</feature>
<feature type="repeat" description="Solcar 1">
    <location>
        <begin position="21"/>
        <end position="105"/>
    </location>
</feature>
<feature type="repeat" description="Solcar 2">
    <location>
        <begin position="118"/>
        <end position="203"/>
    </location>
</feature>
<feature type="repeat" description="Solcar 3">
    <location>
        <begin position="219"/>
        <end position="303"/>
    </location>
</feature>
<sequence>MSTPLIPPAPPKKTLQLYTPQYYGLCTLGGLLACGTTHSAITPLDLIKCRKQVNPNIYPGNIAGFKTILSKEGLRGLYTGGMPTLIGYSLQGCGKYGFYELFKHKYSTLVGAQKAHEYRTSIYLAASASAELLADIMLCPMEAIKVRVQTSNPRFANTTREAWSKIVTNEGFGTLYRGLAPLWFRQIPYTMMKFASFERIVEALYTYIGKPKNMYSKAEKIGISFAGGYMAGVLCAIISHPADVMVSKLNSNKKAGEGAGAAAARIYKEIGFSGLWNGLGVRIVMIGTLTGAQWLIYDSFKIMCGFPATGA</sequence>